<accession>P54731</accession>
<accession>Q6P1F8</accession>
<protein>
    <recommendedName>
        <fullName>FAS-associated factor 1</fullName>
    </recommendedName>
</protein>
<comment type="function">
    <text evidence="1 4">Ubiquitin-binding protein (By similarity). Required for the progression of DNA replication forks by targeting DNA replication licensing factor CDT1 for degradation (By similarity). Potentiates but cannot initiate FAS-induced apoptosis (PubMed:8524870).</text>
</comment>
<comment type="subunit">
    <text evidence="1">Interacts with CDT1 and ATPase VCP/p97. Interacts (via UBA domain) with FAS (via death domain). Interacts (via UBA domain) with NLRP12 (via DAPIN/PYRIN domain).</text>
</comment>
<comment type="subcellular location">
    <subcellularLocation>
        <location evidence="1">Nucleus</location>
    </subcellularLocation>
</comment>
<organism>
    <name type="scientific">Mus musculus</name>
    <name type="common">Mouse</name>
    <dbReference type="NCBI Taxonomy" id="10090"/>
    <lineage>
        <taxon>Eukaryota</taxon>
        <taxon>Metazoa</taxon>
        <taxon>Chordata</taxon>
        <taxon>Craniata</taxon>
        <taxon>Vertebrata</taxon>
        <taxon>Euteleostomi</taxon>
        <taxon>Mammalia</taxon>
        <taxon>Eutheria</taxon>
        <taxon>Euarchontoglires</taxon>
        <taxon>Glires</taxon>
        <taxon>Rodentia</taxon>
        <taxon>Myomorpha</taxon>
        <taxon>Muroidea</taxon>
        <taxon>Muridae</taxon>
        <taxon>Murinae</taxon>
        <taxon>Mus</taxon>
        <taxon>Mus</taxon>
    </lineage>
</organism>
<gene>
    <name type="primary">Faf1</name>
</gene>
<name>FAF1_MOUSE</name>
<evidence type="ECO:0000250" key="1">
    <source>
        <dbReference type="UniProtKB" id="Q9UNN5"/>
    </source>
</evidence>
<evidence type="ECO:0000255" key="2">
    <source>
        <dbReference type="PROSITE-ProRule" id="PRU00215"/>
    </source>
</evidence>
<evidence type="ECO:0000256" key="3">
    <source>
        <dbReference type="SAM" id="MobiDB-lite"/>
    </source>
</evidence>
<evidence type="ECO:0000269" key="4">
    <source>
    </source>
</evidence>
<evidence type="ECO:0000305" key="5"/>
<evidence type="ECO:0007744" key="6">
    <source>
    </source>
</evidence>
<dbReference type="EMBL" id="U39643">
    <property type="protein sequence ID" value="AAA92091.1"/>
    <property type="molecule type" value="mRNA"/>
</dbReference>
<dbReference type="EMBL" id="AL627188">
    <property type="status" value="NOT_ANNOTATED_CDS"/>
    <property type="molecule type" value="Genomic_DNA"/>
</dbReference>
<dbReference type="EMBL" id="AL627392">
    <property type="status" value="NOT_ANNOTATED_CDS"/>
    <property type="molecule type" value="Genomic_DNA"/>
</dbReference>
<dbReference type="EMBL" id="CH466527">
    <property type="protein sequence ID" value="EDL30696.1"/>
    <property type="molecule type" value="Genomic_DNA"/>
</dbReference>
<dbReference type="EMBL" id="BC065098">
    <property type="protein sequence ID" value="AAH65098.1"/>
    <property type="molecule type" value="mRNA"/>
</dbReference>
<dbReference type="CCDS" id="CCDS18468.1"/>
<dbReference type="RefSeq" id="NP_032009.2">
    <property type="nucleotide sequence ID" value="NM_007983.2"/>
</dbReference>
<dbReference type="BMRB" id="P54731"/>
<dbReference type="EMDB" id="EMD-2319"/>
<dbReference type="SMR" id="P54731"/>
<dbReference type="BioGRID" id="199588">
    <property type="interactions" value="34"/>
</dbReference>
<dbReference type="FunCoup" id="P54731">
    <property type="interactions" value="4584"/>
</dbReference>
<dbReference type="IntAct" id="P54731">
    <property type="interactions" value="2"/>
</dbReference>
<dbReference type="MINT" id="P54731"/>
<dbReference type="STRING" id="10090.ENSMUSP00000099785"/>
<dbReference type="GlyGen" id="P54731">
    <property type="glycosylation" value="2 sites, 1 O-linked glycan (1 site)"/>
</dbReference>
<dbReference type="iPTMnet" id="P54731"/>
<dbReference type="PhosphoSitePlus" id="P54731"/>
<dbReference type="SwissPalm" id="P54731"/>
<dbReference type="jPOST" id="P54731"/>
<dbReference type="PaxDb" id="10090-ENSMUSP00000099785"/>
<dbReference type="PeptideAtlas" id="P54731"/>
<dbReference type="ProteomicsDB" id="275850"/>
<dbReference type="Pumba" id="P54731"/>
<dbReference type="Antibodypedia" id="18936">
    <property type="antibodies" value="423 antibodies from 41 providers"/>
</dbReference>
<dbReference type="DNASU" id="14084"/>
<dbReference type="Ensembl" id="ENSMUST00000102724.5">
    <property type="protein sequence ID" value="ENSMUSP00000099785.5"/>
    <property type="gene ID" value="ENSMUSG00000010517.8"/>
</dbReference>
<dbReference type="GeneID" id="14084"/>
<dbReference type="KEGG" id="mmu:14084"/>
<dbReference type="UCSC" id="uc008uct.1">
    <property type="organism name" value="mouse"/>
</dbReference>
<dbReference type="AGR" id="MGI:109419"/>
<dbReference type="CTD" id="11124"/>
<dbReference type="MGI" id="MGI:109419">
    <property type="gene designation" value="Faf1"/>
</dbReference>
<dbReference type="VEuPathDB" id="HostDB:ENSMUSG00000010517"/>
<dbReference type="eggNOG" id="KOG1363">
    <property type="taxonomic scope" value="Eukaryota"/>
</dbReference>
<dbReference type="GeneTree" id="ENSGT00940000154831"/>
<dbReference type="HOGENOM" id="CLU_028119_0_0_1"/>
<dbReference type="InParanoid" id="P54731"/>
<dbReference type="OMA" id="YEGCKTI"/>
<dbReference type="OrthoDB" id="1920064at2759"/>
<dbReference type="PhylomeDB" id="P54731"/>
<dbReference type="TreeFam" id="TF314172"/>
<dbReference type="BioGRID-ORCS" id="14084">
    <property type="hits" value="6 hits in 79 CRISPR screens"/>
</dbReference>
<dbReference type="ChiTaRS" id="Faf1">
    <property type="organism name" value="mouse"/>
</dbReference>
<dbReference type="PRO" id="PR:P54731"/>
<dbReference type="Proteomes" id="UP000000589">
    <property type="component" value="Chromosome 4"/>
</dbReference>
<dbReference type="RNAct" id="P54731">
    <property type="molecule type" value="protein"/>
</dbReference>
<dbReference type="Bgee" id="ENSMUSG00000010517">
    <property type="expression patterns" value="Expressed in floor plate of midbrain and 253 other cell types or tissues"/>
</dbReference>
<dbReference type="GO" id="GO:0005737">
    <property type="term" value="C:cytoplasm"/>
    <property type="evidence" value="ECO:0000314"/>
    <property type="project" value="MGI"/>
</dbReference>
<dbReference type="GO" id="GO:0005829">
    <property type="term" value="C:cytosol"/>
    <property type="evidence" value="ECO:0000250"/>
    <property type="project" value="UniProtKB"/>
</dbReference>
<dbReference type="GO" id="GO:0005635">
    <property type="term" value="C:nuclear envelope"/>
    <property type="evidence" value="ECO:0000314"/>
    <property type="project" value="MGI"/>
</dbReference>
<dbReference type="GO" id="GO:0005654">
    <property type="term" value="C:nucleoplasm"/>
    <property type="evidence" value="ECO:0007669"/>
    <property type="project" value="Ensembl"/>
</dbReference>
<dbReference type="GO" id="GO:0005634">
    <property type="term" value="C:nucleus"/>
    <property type="evidence" value="ECO:0000250"/>
    <property type="project" value="UniProtKB"/>
</dbReference>
<dbReference type="GO" id="GO:1990917">
    <property type="term" value="C:ooplasm"/>
    <property type="evidence" value="ECO:0000314"/>
    <property type="project" value="MGI"/>
</dbReference>
<dbReference type="GO" id="GO:0048471">
    <property type="term" value="C:perinuclear region of cytoplasm"/>
    <property type="evidence" value="ECO:0000250"/>
    <property type="project" value="UniProtKB"/>
</dbReference>
<dbReference type="GO" id="GO:0034098">
    <property type="term" value="C:VCP-NPL4-UFD1 AAA ATPase complex"/>
    <property type="evidence" value="ECO:0007669"/>
    <property type="project" value="Ensembl"/>
</dbReference>
<dbReference type="GO" id="GO:0031072">
    <property type="term" value="F:heat shock protein binding"/>
    <property type="evidence" value="ECO:0000250"/>
    <property type="project" value="UniProtKB"/>
</dbReference>
<dbReference type="GO" id="GO:0051059">
    <property type="term" value="F:NF-kappaB binding"/>
    <property type="evidence" value="ECO:0007669"/>
    <property type="project" value="Ensembl"/>
</dbReference>
<dbReference type="GO" id="GO:0019904">
    <property type="term" value="F:protein domain specific binding"/>
    <property type="evidence" value="ECO:0000353"/>
    <property type="project" value="MGI"/>
</dbReference>
<dbReference type="GO" id="GO:0019901">
    <property type="term" value="F:protein kinase binding"/>
    <property type="evidence" value="ECO:0000250"/>
    <property type="project" value="UniProtKB"/>
</dbReference>
<dbReference type="GO" id="GO:0043130">
    <property type="term" value="F:ubiquitin binding"/>
    <property type="evidence" value="ECO:0007669"/>
    <property type="project" value="Ensembl"/>
</dbReference>
<dbReference type="GO" id="GO:0031625">
    <property type="term" value="F:ubiquitin protein ligase binding"/>
    <property type="evidence" value="ECO:0007669"/>
    <property type="project" value="Ensembl"/>
</dbReference>
<dbReference type="GO" id="GO:0006915">
    <property type="term" value="P:apoptotic process"/>
    <property type="evidence" value="ECO:0007669"/>
    <property type="project" value="UniProtKB-KW"/>
</dbReference>
<dbReference type="GO" id="GO:0036337">
    <property type="term" value="P:Fas signaling pathway"/>
    <property type="evidence" value="ECO:0000250"/>
    <property type="project" value="UniProtKB"/>
</dbReference>
<dbReference type="GO" id="GO:0043124">
    <property type="term" value="P:negative regulation of canonical NF-kappaB signal transduction"/>
    <property type="evidence" value="ECO:0000250"/>
    <property type="project" value="UniProtKB"/>
</dbReference>
<dbReference type="GO" id="GO:0045740">
    <property type="term" value="P:positive regulation of DNA replication"/>
    <property type="evidence" value="ECO:0007669"/>
    <property type="project" value="Ensembl"/>
</dbReference>
<dbReference type="GO" id="GO:1902043">
    <property type="term" value="P:positive regulation of extrinsic apoptotic signaling pathway via death domain receptors"/>
    <property type="evidence" value="ECO:0000314"/>
    <property type="project" value="MGI"/>
</dbReference>
<dbReference type="GO" id="GO:0045732">
    <property type="term" value="P:positive regulation of protein catabolic process"/>
    <property type="evidence" value="ECO:0007669"/>
    <property type="project" value="Ensembl"/>
</dbReference>
<dbReference type="GO" id="GO:0030155">
    <property type="term" value="P:regulation of cell adhesion"/>
    <property type="evidence" value="ECO:0000315"/>
    <property type="project" value="MGI"/>
</dbReference>
<dbReference type="GO" id="GO:0042176">
    <property type="term" value="P:regulation of protein catabolic process"/>
    <property type="evidence" value="ECO:0000250"/>
    <property type="project" value="UniProtKB"/>
</dbReference>
<dbReference type="CDD" id="cd02990">
    <property type="entry name" value="UAS_FAF1"/>
    <property type="match status" value="1"/>
</dbReference>
<dbReference type="CDD" id="cd14413">
    <property type="entry name" value="UBA_FAF1"/>
    <property type="match status" value="1"/>
</dbReference>
<dbReference type="CDD" id="cd17129">
    <property type="entry name" value="Ubl1_FAF1"/>
    <property type="match status" value="1"/>
</dbReference>
<dbReference type="CDD" id="cd17056">
    <property type="entry name" value="Ubl_FAF1"/>
    <property type="match status" value="1"/>
</dbReference>
<dbReference type="CDD" id="cd01771">
    <property type="entry name" value="UBX_UBXN3A"/>
    <property type="match status" value="1"/>
</dbReference>
<dbReference type="CDD" id="cd22249">
    <property type="entry name" value="UDM1_RNF168_RNF169-like"/>
    <property type="match status" value="1"/>
</dbReference>
<dbReference type="FunFam" id="3.10.20.90:FF:000089">
    <property type="entry name" value="Fas associated factor 1"/>
    <property type="match status" value="1"/>
</dbReference>
<dbReference type="FunFam" id="3.10.20.90:FF:000122">
    <property type="entry name" value="Fas associated factor 1"/>
    <property type="match status" value="1"/>
</dbReference>
<dbReference type="FunFam" id="3.10.20.90:FF:000137">
    <property type="entry name" value="Fas associated factor 1"/>
    <property type="match status" value="1"/>
</dbReference>
<dbReference type="FunFam" id="3.40.30.10:FF:000061">
    <property type="entry name" value="Fas associated factor 1"/>
    <property type="match status" value="1"/>
</dbReference>
<dbReference type="FunFam" id="1.10.8.10:FF:000045">
    <property type="entry name" value="Putative FAS-associated factor 1"/>
    <property type="match status" value="1"/>
</dbReference>
<dbReference type="Gene3D" id="1.10.8.10">
    <property type="entry name" value="DNA helicase RuvA subunit, C-terminal domain"/>
    <property type="match status" value="1"/>
</dbReference>
<dbReference type="Gene3D" id="3.40.30.10">
    <property type="entry name" value="Glutaredoxin"/>
    <property type="match status" value="1"/>
</dbReference>
<dbReference type="Gene3D" id="3.10.20.90">
    <property type="entry name" value="Phosphatidylinositol 3-kinase Catalytic Subunit, Chain A, domain 1"/>
    <property type="match status" value="3"/>
</dbReference>
<dbReference type="InterPro" id="IPR033043">
    <property type="entry name" value="FAF1-like_UBX"/>
</dbReference>
<dbReference type="InterPro" id="IPR049483">
    <property type="entry name" value="FAF1_2-like_UAS"/>
</dbReference>
<dbReference type="InterPro" id="IPR044541">
    <property type="entry name" value="FAF1_UBA"/>
</dbReference>
<dbReference type="InterPro" id="IPR036249">
    <property type="entry name" value="Thioredoxin-like_sf"/>
</dbReference>
<dbReference type="InterPro" id="IPR006577">
    <property type="entry name" value="UAS"/>
</dbReference>
<dbReference type="InterPro" id="IPR029071">
    <property type="entry name" value="Ubiquitin-like_domsf"/>
</dbReference>
<dbReference type="InterPro" id="IPR001012">
    <property type="entry name" value="UBX_dom"/>
</dbReference>
<dbReference type="InterPro" id="IPR050730">
    <property type="entry name" value="UBX_domain-protein"/>
</dbReference>
<dbReference type="PANTHER" id="PTHR23322:SF96">
    <property type="entry name" value="FAS-ASSOCIATED FACTOR 1"/>
    <property type="match status" value="1"/>
</dbReference>
<dbReference type="PANTHER" id="PTHR23322">
    <property type="entry name" value="FAS-ASSOCIATED PROTEIN"/>
    <property type="match status" value="1"/>
</dbReference>
<dbReference type="Pfam" id="PF21021">
    <property type="entry name" value="FAF1"/>
    <property type="match status" value="1"/>
</dbReference>
<dbReference type="Pfam" id="PF14555">
    <property type="entry name" value="UBA_4"/>
    <property type="match status" value="1"/>
</dbReference>
<dbReference type="Pfam" id="PF00789">
    <property type="entry name" value="UBX"/>
    <property type="match status" value="1"/>
</dbReference>
<dbReference type="SMART" id="SM00594">
    <property type="entry name" value="UAS"/>
    <property type="match status" value="1"/>
</dbReference>
<dbReference type="SMART" id="SM00166">
    <property type="entry name" value="UBX"/>
    <property type="match status" value="1"/>
</dbReference>
<dbReference type="SUPFAM" id="SSF52833">
    <property type="entry name" value="Thioredoxin-like"/>
    <property type="match status" value="1"/>
</dbReference>
<dbReference type="SUPFAM" id="SSF54236">
    <property type="entry name" value="Ubiquitin-like"/>
    <property type="match status" value="3"/>
</dbReference>
<dbReference type="PROSITE" id="PS50033">
    <property type="entry name" value="UBX"/>
    <property type="match status" value="1"/>
</dbReference>
<feature type="chain" id="PRO_0000211039" description="FAS-associated factor 1">
    <location>
        <begin position="1"/>
        <end position="649"/>
    </location>
</feature>
<feature type="domain" description="UBA" evidence="1">
    <location>
        <begin position="1"/>
        <end position="57"/>
    </location>
</feature>
<feature type="domain" description="UBX" evidence="2">
    <location>
        <begin position="568"/>
        <end position="645"/>
    </location>
</feature>
<feature type="region of interest" description="Disordered" evidence="3">
    <location>
        <begin position="56"/>
        <end position="84"/>
    </location>
</feature>
<feature type="region of interest" description="Disordered" evidence="3">
    <location>
        <begin position="266"/>
        <end position="290"/>
    </location>
</feature>
<feature type="compositionally biased region" description="Low complexity" evidence="3">
    <location>
        <begin position="68"/>
        <end position="82"/>
    </location>
</feature>
<feature type="modified residue" description="Phosphoserine" evidence="6">
    <location>
        <position position="319"/>
    </location>
</feature>
<feature type="modified residue" description="Phosphothreonine" evidence="1">
    <location>
        <position position="579"/>
    </location>
</feature>
<feature type="modified residue" description="Phosphoserine" evidence="6">
    <location>
        <position position="581"/>
    </location>
</feature>
<feature type="sequence conflict" description="In Ref. 1; AAA92091." evidence="5" ref="1">
    <original>RE</original>
    <variation>LP</variation>
    <location>
        <begin position="7"/>
        <end position="8"/>
    </location>
</feature>
<feature type="sequence conflict" description="In Ref. 1; AAA92091." evidence="5" ref="1">
    <original>G</original>
    <variation>S</variation>
    <location>
        <position position="345"/>
    </location>
</feature>
<feature type="sequence conflict" description="In Ref. 1; AAA92091." evidence="5" ref="1">
    <original>F</original>
    <variation>Y</variation>
    <location>
        <position position="352"/>
    </location>
</feature>
<sequence length="649" mass="73863">MASNMDREMILADFQACTGIENIDEAITLLEQNNWDLVAAINGVIPQENGILQSDFGGETMPGPTFDPASHPAPASTPSSSAFRPVMPSRQIVERQPRMLDFRVEYRDRNVDVVLEDSCTVGEIKQILENELQIPVPKMLLKGWKTGDVEDSTVLKSLHLPKNNSLYVLTPDLPPPSSSSHAGALQESLNQNFMLIITHREVQREYNLNFSGSSTVQEVKRNVYDLTSIPVRHQLWEGWPASATDDSMCLAESGLSYPCHRLTVGRRTSPVQTREQSEEQSTDVHMVSDSDGDDFEDASEFGVDDGEVFGMASSTLRKSPMMPENAENEGDALLQFTAEFSSRYGDCHPVFFIGSLEAAFQEAFYVKARDRKLLAIYLHHDESVLTNVFCSQMLCAESIVSYLSQNFITWAWDLTKDTNRARFLTMCNRHFGSVIAQTIRTQKTDQFPLFLIIMGKRSSNEVLNVIQGNTTVDELMMRLMAAMEIFSAQQQEDIKDEDEREARENVKREQDEAYRLSLEADRAKREAHEREMAEQFRLEQIRKEQEEEREAIRLSLEQALPPEPKEENAEPVSKLRIRTPSGEFLERRFLASNKLQIVFDFVASKGFPWDEFKLLSTFPRRDVTQLDPNKSLLEVNLFPQETLFLQAKE</sequence>
<proteinExistence type="evidence at protein level"/>
<reference key="1">
    <citation type="journal article" date="1995" name="Proc. Natl. Acad. Sci. U.S.A.">
        <title>A Fas-associated protein factor, FAF1, potentiates Fas-mediated apoptosis.</title>
        <authorList>
            <person name="Chu K."/>
            <person name="Niu X."/>
            <person name="Williams L.T."/>
        </authorList>
    </citation>
    <scope>NUCLEOTIDE SEQUENCE [MRNA]</scope>
    <scope>FUNCTION</scope>
</reference>
<reference key="2">
    <citation type="journal article" date="2009" name="PLoS Biol.">
        <title>Lineage-specific biology revealed by a finished genome assembly of the mouse.</title>
        <authorList>
            <person name="Church D.M."/>
            <person name="Goodstadt L."/>
            <person name="Hillier L.W."/>
            <person name="Zody M.C."/>
            <person name="Goldstein S."/>
            <person name="She X."/>
            <person name="Bult C.J."/>
            <person name="Agarwala R."/>
            <person name="Cherry J.L."/>
            <person name="DiCuccio M."/>
            <person name="Hlavina W."/>
            <person name="Kapustin Y."/>
            <person name="Meric P."/>
            <person name="Maglott D."/>
            <person name="Birtle Z."/>
            <person name="Marques A.C."/>
            <person name="Graves T."/>
            <person name="Zhou S."/>
            <person name="Teague B."/>
            <person name="Potamousis K."/>
            <person name="Churas C."/>
            <person name="Place M."/>
            <person name="Herschleb J."/>
            <person name="Runnheim R."/>
            <person name="Forrest D."/>
            <person name="Amos-Landgraf J."/>
            <person name="Schwartz D.C."/>
            <person name="Cheng Z."/>
            <person name="Lindblad-Toh K."/>
            <person name="Eichler E.E."/>
            <person name="Ponting C.P."/>
        </authorList>
    </citation>
    <scope>NUCLEOTIDE SEQUENCE [LARGE SCALE GENOMIC DNA]</scope>
    <source>
        <strain>C57BL/6J</strain>
    </source>
</reference>
<reference key="3">
    <citation type="submission" date="2005-09" db="EMBL/GenBank/DDBJ databases">
        <authorList>
            <person name="Mural R.J."/>
            <person name="Adams M.D."/>
            <person name="Myers E.W."/>
            <person name="Smith H.O."/>
            <person name="Venter J.C."/>
        </authorList>
    </citation>
    <scope>NUCLEOTIDE SEQUENCE [LARGE SCALE GENOMIC DNA]</scope>
</reference>
<reference key="4">
    <citation type="journal article" date="2004" name="Genome Res.">
        <title>The status, quality, and expansion of the NIH full-length cDNA project: the Mammalian Gene Collection (MGC).</title>
        <authorList>
            <consortium name="The MGC Project Team"/>
        </authorList>
    </citation>
    <scope>NUCLEOTIDE SEQUENCE [LARGE SCALE MRNA]</scope>
    <source>
        <strain>C57BL/6J</strain>
        <tissue>Brain</tissue>
    </source>
</reference>
<reference key="5">
    <citation type="journal article" date="2010" name="Cell">
        <title>A tissue-specific atlas of mouse protein phosphorylation and expression.</title>
        <authorList>
            <person name="Huttlin E.L."/>
            <person name="Jedrychowski M.P."/>
            <person name="Elias J.E."/>
            <person name="Goswami T."/>
            <person name="Rad R."/>
            <person name="Beausoleil S.A."/>
            <person name="Villen J."/>
            <person name="Haas W."/>
            <person name="Sowa M.E."/>
            <person name="Gygi S.P."/>
        </authorList>
    </citation>
    <scope>PHOSPHORYLATION [LARGE SCALE ANALYSIS] AT SER-319 AND SER-581</scope>
    <scope>IDENTIFICATION BY MASS SPECTROMETRY [LARGE SCALE ANALYSIS]</scope>
    <source>
        <tissue>Brain</tissue>
        <tissue>Brown adipose tissue</tissue>
        <tissue>Kidney</tissue>
        <tissue>Liver</tissue>
        <tissue>Lung</tissue>
        <tissue>Pancreas</tissue>
        <tissue>Spleen</tissue>
        <tissue>Testis</tissue>
    </source>
</reference>
<keyword id="KW-0053">Apoptosis</keyword>
<keyword id="KW-0539">Nucleus</keyword>
<keyword id="KW-0597">Phosphoprotein</keyword>
<keyword id="KW-1185">Reference proteome</keyword>